<name>ER_DROVI</name>
<organism>
    <name type="scientific">Drosophila virilis</name>
    <name type="common">Fruit fly</name>
    <dbReference type="NCBI Taxonomy" id="7244"/>
    <lineage>
        <taxon>Eukaryota</taxon>
        <taxon>Metazoa</taxon>
        <taxon>Ecdysozoa</taxon>
        <taxon>Arthropoda</taxon>
        <taxon>Hexapoda</taxon>
        <taxon>Insecta</taxon>
        <taxon>Pterygota</taxon>
        <taxon>Neoptera</taxon>
        <taxon>Endopterygota</taxon>
        <taxon>Diptera</taxon>
        <taxon>Brachycera</taxon>
        <taxon>Muscomorpha</taxon>
        <taxon>Ephydroidea</taxon>
        <taxon>Drosophilidae</taxon>
        <taxon>Drosophila</taxon>
    </lineage>
</organism>
<protein>
    <recommendedName>
        <fullName>Protein enhancer of rudimentary</fullName>
    </recommendedName>
</protein>
<proteinExistence type="inferred from homology"/>
<gene>
    <name type="primary">e(r)</name>
    <name type="ORF">GJ15176</name>
</gene>
<evidence type="ECO:0000269" key="1">
    <source>
    </source>
</evidence>
<evidence type="ECO:0000305" key="2"/>
<keyword id="KW-0131">Cell cycle</keyword>
<keyword id="KW-0597">Phosphoprotein</keyword>
<keyword id="KW-0665">Pyrimidine biosynthesis</keyword>
<keyword id="KW-1185">Reference proteome</keyword>
<dbReference type="EMBL" id="U66868">
    <property type="protein sequence ID" value="AAC47488.1"/>
    <property type="molecule type" value="Genomic_DNA"/>
</dbReference>
<dbReference type="EMBL" id="CH940660">
    <property type="protein sequence ID" value="EDW58168.1"/>
    <property type="molecule type" value="Genomic_DNA"/>
</dbReference>
<dbReference type="PIR" id="A58158">
    <property type="entry name" value="A58158"/>
</dbReference>
<dbReference type="RefSeq" id="XP_002059099.1">
    <property type="nucleotide sequence ID" value="XM_002059063.2"/>
</dbReference>
<dbReference type="RefSeq" id="XP_032295783.1">
    <property type="nucleotide sequence ID" value="XM_032439892.2"/>
</dbReference>
<dbReference type="SMR" id="Q94554"/>
<dbReference type="FunCoup" id="Q94554">
    <property type="interactions" value="2492"/>
</dbReference>
<dbReference type="STRING" id="7244.Q94554"/>
<dbReference type="EnsemblMetazoa" id="FBtr0435596">
    <property type="protein sequence ID" value="FBpp0392551"/>
    <property type="gene ID" value="FBgn0014840"/>
</dbReference>
<dbReference type="EnsemblMetazoa" id="XM_032439892.1">
    <property type="protein sequence ID" value="XP_032295783.1"/>
    <property type="gene ID" value="LOC116649727"/>
</dbReference>
<dbReference type="GeneID" id="116649727"/>
<dbReference type="eggNOG" id="KOG1766">
    <property type="taxonomic scope" value="Eukaryota"/>
</dbReference>
<dbReference type="HOGENOM" id="CLU_125703_1_0_1"/>
<dbReference type="InParanoid" id="Q94554"/>
<dbReference type="OMA" id="ESRTWSD"/>
<dbReference type="OrthoDB" id="7887808at2759"/>
<dbReference type="PhylomeDB" id="Q94554"/>
<dbReference type="Proteomes" id="UP000008792">
    <property type="component" value="Unassembled WGS sequence"/>
</dbReference>
<dbReference type="GO" id="GO:0005634">
    <property type="term" value="C:nucleus"/>
    <property type="evidence" value="ECO:0007669"/>
    <property type="project" value="EnsemblMetazoa"/>
</dbReference>
<dbReference type="GO" id="GO:0006207">
    <property type="term" value="P:'de novo' pyrimidine nucleobase biosynthetic process"/>
    <property type="evidence" value="ECO:0000304"/>
    <property type="project" value="UniProtKB"/>
</dbReference>
<dbReference type="GO" id="GO:0006221">
    <property type="term" value="P:pyrimidine nucleotide biosynthetic process"/>
    <property type="evidence" value="ECO:0007669"/>
    <property type="project" value="UniProtKB-KW"/>
</dbReference>
<dbReference type="FunFam" id="3.30.2260.10:FF:000001">
    <property type="entry name" value="Enhancer of rudimentary homolog"/>
    <property type="match status" value="1"/>
</dbReference>
<dbReference type="Gene3D" id="3.30.2260.10">
    <property type="entry name" value="Enhancer of rudimentary"/>
    <property type="match status" value="1"/>
</dbReference>
<dbReference type="InterPro" id="IPR035912">
    <property type="entry name" value="EHR_sf"/>
</dbReference>
<dbReference type="InterPro" id="IPR000781">
    <property type="entry name" value="ERH"/>
</dbReference>
<dbReference type="PANTHER" id="PTHR12373">
    <property type="entry name" value="ENHANCER OF RUDIMENTARY ERH"/>
    <property type="match status" value="1"/>
</dbReference>
<dbReference type="PANTHER" id="PTHR12373:SF0">
    <property type="entry name" value="ENHANCER OF RUDIMENTARY HOMOLOG"/>
    <property type="match status" value="1"/>
</dbReference>
<dbReference type="Pfam" id="PF01133">
    <property type="entry name" value="ER"/>
    <property type="match status" value="1"/>
</dbReference>
<dbReference type="PIRSF" id="PIRSF016393">
    <property type="entry name" value="Enh_rudimentary"/>
    <property type="match status" value="1"/>
</dbReference>
<dbReference type="SUPFAM" id="SSF143875">
    <property type="entry name" value="ERH-like"/>
    <property type="match status" value="1"/>
</dbReference>
<dbReference type="PROSITE" id="PS01290">
    <property type="entry name" value="ER"/>
    <property type="match status" value="1"/>
</dbReference>
<feature type="chain" id="PRO_0000219349" description="Protein enhancer of rudimentary">
    <location>
        <begin position="1"/>
        <end position="104"/>
    </location>
</feature>
<feature type="modified residue" description="Phosphothreonine; by CK2" evidence="2">
    <location>
        <position position="18"/>
    </location>
</feature>
<feature type="modified residue" description="Phosphoserine; by CK2" evidence="2">
    <location>
        <position position="24"/>
    </location>
</feature>
<reference key="1">
    <citation type="journal article" date="1994" name="Genetics">
        <title>Enhancer of rudimentaryp1, e(r)p1, a highly conserved enhancer of the rudimentary gene.</title>
        <authorList>
            <person name="Wojcik E."/>
            <person name="Murphy A.M."/>
            <person name="Fares H."/>
            <person name="Dang-Vu K."/>
            <person name="Tsubota S.I."/>
        </authorList>
    </citation>
    <scope>NUCLEOTIDE SEQUENCE [GENOMIC DNA]</scope>
</reference>
<reference key="2">
    <citation type="journal article" date="1997" name="Gene">
        <title>The putative cell cycle gene, enhancer of rudimentary, encodes a highly conserved protein found in plants and animals.</title>
        <authorList>
            <person name="Gelsthorpe M."/>
            <person name="Pulumati M."/>
            <person name="McCallum C."/>
            <person name="Dang-Vu K."/>
            <person name="Tsubota S.I."/>
        </authorList>
    </citation>
    <scope>NUCLEOTIDE SEQUENCE [GENOMIC DNA]</scope>
    <scope>FUNCTION</scope>
</reference>
<reference key="3">
    <citation type="journal article" date="2007" name="Nature">
        <title>Evolution of genes and genomes on the Drosophila phylogeny.</title>
        <authorList>
            <consortium name="Drosophila 12 genomes consortium"/>
        </authorList>
    </citation>
    <scope>NUCLEOTIDE SEQUENCE [LARGE SCALE GENOMIC DNA]</scope>
    <source>
        <strain>Tucson 15010-1051.87</strain>
    </source>
</reference>
<comment type="function">
    <text evidence="1">Acts as an enhancer of the rudimentary gene. Has a role in pyrimidine biosynthesis and the cell cycle.</text>
</comment>
<comment type="similarity">
    <text evidence="2">Belongs to the E(R) family.</text>
</comment>
<accession>Q94554</accession>
<accession>B4MD96</accession>
<sequence>MSHTILLVQPGARPETRTYCDYESVNECMEGVCKIYEEHLKRRNPNTPTITYDISQLFDFIDTLIDISCLVYQKSTNTYAPYNKDWIKEKIYVLLRQAAFSPNA</sequence>